<feature type="chain" id="PRO_0000293955" description="Small ribosomal subunit protein uS3c">
    <location>
        <begin position="1"/>
        <end position="218"/>
    </location>
</feature>
<feature type="domain" description="KH type-2">
    <location>
        <begin position="43"/>
        <end position="118"/>
    </location>
</feature>
<evidence type="ECO:0000250" key="1"/>
<evidence type="ECO:0000305" key="2"/>
<gene>
    <name type="primary">rps3</name>
    <name type="ordered locus">Poptr_cp061</name>
</gene>
<organism>
    <name type="scientific">Populus trichocarpa</name>
    <name type="common">Western balsam poplar</name>
    <name type="synonym">Populus balsamifera subsp. trichocarpa</name>
    <dbReference type="NCBI Taxonomy" id="3694"/>
    <lineage>
        <taxon>Eukaryota</taxon>
        <taxon>Viridiplantae</taxon>
        <taxon>Streptophyta</taxon>
        <taxon>Embryophyta</taxon>
        <taxon>Tracheophyta</taxon>
        <taxon>Spermatophyta</taxon>
        <taxon>Magnoliopsida</taxon>
        <taxon>eudicotyledons</taxon>
        <taxon>Gunneridae</taxon>
        <taxon>Pentapetalae</taxon>
        <taxon>rosids</taxon>
        <taxon>fabids</taxon>
        <taxon>Malpighiales</taxon>
        <taxon>Salicaceae</taxon>
        <taxon>Saliceae</taxon>
        <taxon>Populus</taxon>
    </lineage>
</organism>
<geneLocation type="chloroplast"/>
<protein>
    <recommendedName>
        <fullName evidence="2">Small ribosomal subunit protein uS3c</fullName>
    </recommendedName>
    <alternativeName>
        <fullName>30S ribosomal protein S3, chloroplastic</fullName>
    </alternativeName>
</protein>
<accession>A4GYU9</accession>
<sequence>MGQKINPLGFRLGTTQDHYSLWFAQPKNFFEGLQEDQKIRNCIKNYVQKNMKISSGVEGIGHIEIQKRIDVIQVIIYLGFPKFLTEGKPKRIKELQINVQKELNCMNRKLNISITRIENPYMHPNVLAEFIAGQLKNRVSFRKAMKKAIELTEQSNTKGIQVQIAGRLDGKEIARAEWVREGRVPLQTLRAKINYCSYTVRTIYGVLGIKIWIFVDEE</sequence>
<proteinExistence type="inferred from homology"/>
<comment type="subunit">
    <text evidence="1">Part of the 30S ribosomal subunit.</text>
</comment>
<comment type="subcellular location">
    <subcellularLocation>
        <location>Plastid</location>
        <location>Chloroplast</location>
    </subcellularLocation>
</comment>
<comment type="similarity">
    <text evidence="2">Belongs to the universal ribosomal protein uS3 family.</text>
</comment>
<reference key="1">
    <citation type="journal article" date="2006" name="Science">
        <title>The genome of black cottonwood, Populus trichocarpa (Torr. &amp; Gray).</title>
        <authorList>
            <person name="Tuskan G.A."/>
            <person name="Difazio S."/>
            <person name="Jansson S."/>
            <person name="Bohlmann J."/>
            <person name="Grigoriev I."/>
            <person name="Hellsten U."/>
            <person name="Putnam N."/>
            <person name="Ralph S."/>
            <person name="Rombauts S."/>
            <person name="Salamov A."/>
            <person name="Schein J."/>
            <person name="Sterck L."/>
            <person name="Aerts A."/>
            <person name="Bhalerao R.R."/>
            <person name="Bhalerao R.P."/>
            <person name="Blaudez D."/>
            <person name="Boerjan W."/>
            <person name="Brun A."/>
            <person name="Brunner A."/>
            <person name="Busov V."/>
            <person name="Campbell M."/>
            <person name="Carlson J."/>
            <person name="Chalot M."/>
            <person name="Chapman J."/>
            <person name="Chen G.-L."/>
            <person name="Cooper D."/>
            <person name="Coutinho P.M."/>
            <person name="Couturier J."/>
            <person name="Covert S."/>
            <person name="Cronk Q."/>
            <person name="Cunningham R."/>
            <person name="Davis J."/>
            <person name="Degroeve S."/>
            <person name="Dejardin A."/>
            <person name="dePamphilis C.W."/>
            <person name="Detter J."/>
            <person name="Dirks B."/>
            <person name="Dubchak I."/>
            <person name="Duplessis S."/>
            <person name="Ehlting J."/>
            <person name="Ellis B."/>
            <person name="Gendler K."/>
            <person name="Goodstein D."/>
            <person name="Gribskov M."/>
            <person name="Grimwood J."/>
            <person name="Groover A."/>
            <person name="Gunter L."/>
            <person name="Hamberger B."/>
            <person name="Heinze B."/>
            <person name="Helariutta Y."/>
            <person name="Henrissat B."/>
            <person name="Holligan D."/>
            <person name="Holt R."/>
            <person name="Huang W."/>
            <person name="Islam-Faridi N."/>
            <person name="Jones S."/>
            <person name="Jones-Rhoades M."/>
            <person name="Jorgensen R."/>
            <person name="Joshi C."/>
            <person name="Kangasjaervi J."/>
            <person name="Karlsson J."/>
            <person name="Kelleher C."/>
            <person name="Kirkpatrick R."/>
            <person name="Kirst M."/>
            <person name="Kohler A."/>
            <person name="Kalluri U."/>
            <person name="Larimer F."/>
            <person name="Leebens-Mack J."/>
            <person name="Leple J.-C."/>
            <person name="Locascio P."/>
            <person name="Lou Y."/>
            <person name="Lucas S."/>
            <person name="Martin F."/>
            <person name="Montanini B."/>
            <person name="Napoli C."/>
            <person name="Nelson D.R."/>
            <person name="Nelson C."/>
            <person name="Nieminen K."/>
            <person name="Nilsson O."/>
            <person name="Pereda V."/>
            <person name="Peter G."/>
            <person name="Philippe R."/>
            <person name="Pilate G."/>
            <person name="Poliakov A."/>
            <person name="Razumovskaya J."/>
            <person name="Richardson P."/>
            <person name="Rinaldi C."/>
            <person name="Ritland K."/>
            <person name="Rouze P."/>
            <person name="Ryaboy D."/>
            <person name="Schmutz J."/>
            <person name="Schrader J."/>
            <person name="Segerman B."/>
            <person name="Shin H."/>
            <person name="Siddiqui A."/>
            <person name="Sterky F."/>
            <person name="Terry A."/>
            <person name="Tsai C.-J."/>
            <person name="Uberbacher E."/>
            <person name="Unneberg P."/>
            <person name="Vahala J."/>
            <person name="Wall K."/>
            <person name="Wessler S."/>
            <person name="Yang G."/>
            <person name="Yin T."/>
            <person name="Douglas C."/>
            <person name="Marra M."/>
            <person name="Sandberg G."/>
            <person name="Van de Peer Y."/>
            <person name="Rokhsar D.S."/>
        </authorList>
    </citation>
    <scope>NUCLEOTIDE SEQUENCE [LARGE SCALE GENOMIC DNA]</scope>
    <source>
        <strain>cv. Nisqually</strain>
    </source>
</reference>
<keyword id="KW-0150">Chloroplast</keyword>
<keyword id="KW-0934">Plastid</keyword>
<keyword id="KW-1185">Reference proteome</keyword>
<keyword id="KW-0687">Ribonucleoprotein</keyword>
<keyword id="KW-0689">Ribosomal protein</keyword>
<keyword id="KW-0694">RNA-binding</keyword>
<keyword id="KW-0699">rRNA-binding</keyword>
<name>RR3_POPTR</name>
<dbReference type="EMBL" id="EF489041">
    <property type="protein sequence ID" value="ABO36744.1"/>
    <property type="molecule type" value="Genomic_DNA"/>
</dbReference>
<dbReference type="RefSeq" id="YP_001109540.1">
    <property type="nucleotide sequence ID" value="NC_009143.1"/>
</dbReference>
<dbReference type="SMR" id="A4GYU9"/>
<dbReference type="FunCoup" id="A4GYU9">
    <property type="interactions" value="404"/>
</dbReference>
<dbReference type="STRING" id="3694.A4GYU9"/>
<dbReference type="GeneID" id="4929711"/>
<dbReference type="KEGG" id="pop:4929711"/>
<dbReference type="eggNOG" id="ENOG502QWFI">
    <property type="taxonomic scope" value="Eukaryota"/>
</dbReference>
<dbReference type="InParanoid" id="A4GYU9"/>
<dbReference type="OrthoDB" id="1842609at2759"/>
<dbReference type="Proteomes" id="UP000006729">
    <property type="component" value="Chloroplast"/>
</dbReference>
<dbReference type="ExpressionAtlas" id="A4GYU9">
    <property type="expression patterns" value="baseline and differential"/>
</dbReference>
<dbReference type="GO" id="GO:0009507">
    <property type="term" value="C:chloroplast"/>
    <property type="evidence" value="ECO:0007669"/>
    <property type="project" value="UniProtKB-SubCell"/>
</dbReference>
<dbReference type="GO" id="GO:0022627">
    <property type="term" value="C:cytosolic small ribosomal subunit"/>
    <property type="evidence" value="ECO:0000318"/>
    <property type="project" value="GO_Central"/>
</dbReference>
<dbReference type="GO" id="GO:0019843">
    <property type="term" value="F:rRNA binding"/>
    <property type="evidence" value="ECO:0007669"/>
    <property type="project" value="UniProtKB-UniRule"/>
</dbReference>
<dbReference type="GO" id="GO:0003735">
    <property type="term" value="F:structural constituent of ribosome"/>
    <property type="evidence" value="ECO:0000318"/>
    <property type="project" value="GO_Central"/>
</dbReference>
<dbReference type="GO" id="GO:0006412">
    <property type="term" value="P:translation"/>
    <property type="evidence" value="ECO:0007669"/>
    <property type="project" value="UniProtKB-UniRule"/>
</dbReference>
<dbReference type="CDD" id="cd02412">
    <property type="entry name" value="KH-II_30S_S3"/>
    <property type="match status" value="1"/>
</dbReference>
<dbReference type="FunFam" id="3.30.1140.32:FF:000003">
    <property type="entry name" value="30S ribosomal protein S3, chloroplastic"/>
    <property type="match status" value="1"/>
</dbReference>
<dbReference type="FunFam" id="3.30.300.20:FF:000008">
    <property type="entry name" value="30S ribosomal protein S3, chloroplastic"/>
    <property type="match status" value="1"/>
</dbReference>
<dbReference type="Gene3D" id="3.30.300.20">
    <property type="match status" value="1"/>
</dbReference>
<dbReference type="Gene3D" id="3.30.1140.32">
    <property type="entry name" value="Ribosomal protein S3, C-terminal domain"/>
    <property type="match status" value="1"/>
</dbReference>
<dbReference type="HAMAP" id="MF_01309_B">
    <property type="entry name" value="Ribosomal_uS3_B"/>
    <property type="match status" value="1"/>
</dbReference>
<dbReference type="InterPro" id="IPR015946">
    <property type="entry name" value="KH_dom-like_a/b"/>
</dbReference>
<dbReference type="InterPro" id="IPR004044">
    <property type="entry name" value="KH_dom_type_2"/>
</dbReference>
<dbReference type="InterPro" id="IPR009019">
    <property type="entry name" value="KH_sf_prok-type"/>
</dbReference>
<dbReference type="InterPro" id="IPR036419">
    <property type="entry name" value="Ribosomal_S3_C_sf"/>
</dbReference>
<dbReference type="InterPro" id="IPR005704">
    <property type="entry name" value="Ribosomal_uS3_bac-typ"/>
</dbReference>
<dbReference type="InterPro" id="IPR001351">
    <property type="entry name" value="Ribosomal_uS3_C"/>
</dbReference>
<dbReference type="InterPro" id="IPR018280">
    <property type="entry name" value="Ribosomal_uS3_CS"/>
</dbReference>
<dbReference type="NCBIfam" id="TIGR01009">
    <property type="entry name" value="rpsC_bact"/>
    <property type="match status" value="1"/>
</dbReference>
<dbReference type="PANTHER" id="PTHR11760">
    <property type="entry name" value="30S/40S RIBOSOMAL PROTEIN S3"/>
    <property type="match status" value="1"/>
</dbReference>
<dbReference type="PANTHER" id="PTHR11760:SF19">
    <property type="entry name" value="SMALL RIBOSOMAL SUBUNIT PROTEIN US3C"/>
    <property type="match status" value="1"/>
</dbReference>
<dbReference type="Pfam" id="PF00189">
    <property type="entry name" value="Ribosomal_S3_C"/>
    <property type="match status" value="1"/>
</dbReference>
<dbReference type="SUPFAM" id="SSF54814">
    <property type="entry name" value="Prokaryotic type KH domain (KH-domain type II)"/>
    <property type="match status" value="1"/>
</dbReference>
<dbReference type="SUPFAM" id="SSF54821">
    <property type="entry name" value="Ribosomal protein S3 C-terminal domain"/>
    <property type="match status" value="1"/>
</dbReference>
<dbReference type="PROSITE" id="PS50823">
    <property type="entry name" value="KH_TYPE_2"/>
    <property type="match status" value="1"/>
</dbReference>
<dbReference type="PROSITE" id="PS00548">
    <property type="entry name" value="RIBOSOMAL_S3"/>
    <property type="match status" value="1"/>
</dbReference>